<comment type="function">
    <text evidence="1">Catalyzes the specific phosphorylation of 1,6-anhydro-N-acetylmuramic acid (anhMurNAc) with the simultaneous cleavage of the 1,6-anhydro ring, generating MurNAc-6-P. Is required for the utilization of anhMurNAc either imported from the medium or derived from its own cell wall murein, and thus plays a role in cell wall recycling.</text>
</comment>
<comment type="catalytic activity">
    <reaction evidence="1">
        <text>1,6-anhydro-N-acetyl-beta-muramate + ATP + H2O = N-acetyl-D-muramate 6-phosphate + ADP + H(+)</text>
        <dbReference type="Rhea" id="RHEA:24952"/>
        <dbReference type="ChEBI" id="CHEBI:15377"/>
        <dbReference type="ChEBI" id="CHEBI:15378"/>
        <dbReference type="ChEBI" id="CHEBI:30616"/>
        <dbReference type="ChEBI" id="CHEBI:58690"/>
        <dbReference type="ChEBI" id="CHEBI:58722"/>
        <dbReference type="ChEBI" id="CHEBI:456216"/>
        <dbReference type="EC" id="2.7.1.170"/>
    </reaction>
</comment>
<comment type="pathway">
    <text evidence="1">Amino-sugar metabolism; 1,6-anhydro-N-acetylmuramate degradation.</text>
</comment>
<comment type="pathway">
    <text evidence="1">Cell wall biogenesis; peptidoglycan recycling.</text>
</comment>
<comment type="similarity">
    <text evidence="1">Belongs to the anhydro-N-acetylmuramic acid kinase family.</text>
</comment>
<keyword id="KW-0067">ATP-binding</keyword>
<keyword id="KW-0119">Carbohydrate metabolism</keyword>
<keyword id="KW-0418">Kinase</keyword>
<keyword id="KW-0547">Nucleotide-binding</keyword>
<keyword id="KW-0808">Transferase</keyword>
<name>ANMK_YERPA</name>
<reference key="1">
    <citation type="journal article" date="2006" name="J. Bacteriol.">
        <title>Complete genome sequence of Yersinia pestis strains Antiqua and Nepal516: evidence of gene reduction in an emerging pathogen.</title>
        <authorList>
            <person name="Chain P.S.G."/>
            <person name="Hu P."/>
            <person name="Malfatti S.A."/>
            <person name="Radnedge L."/>
            <person name="Larimer F."/>
            <person name="Vergez L.M."/>
            <person name="Worsham P."/>
            <person name="Chu M.C."/>
            <person name="Andersen G.L."/>
        </authorList>
    </citation>
    <scope>NUCLEOTIDE SEQUENCE [LARGE SCALE GENOMIC DNA]</scope>
    <source>
        <strain>Antiqua</strain>
    </source>
</reference>
<dbReference type="EC" id="2.7.1.170" evidence="1"/>
<dbReference type="EMBL" id="CP000308">
    <property type="protein sequence ID" value="ABG13684.1"/>
    <property type="molecule type" value="Genomic_DNA"/>
</dbReference>
<dbReference type="RefSeq" id="WP_002218322.1">
    <property type="nucleotide sequence ID" value="NZ_CP009906.1"/>
</dbReference>
<dbReference type="SMR" id="Q1C788"/>
<dbReference type="GeneID" id="57976303"/>
<dbReference type="KEGG" id="ypa:YPA_1718"/>
<dbReference type="UniPathway" id="UPA00343"/>
<dbReference type="UniPathway" id="UPA00544"/>
<dbReference type="Proteomes" id="UP000001971">
    <property type="component" value="Chromosome"/>
</dbReference>
<dbReference type="GO" id="GO:0005524">
    <property type="term" value="F:ATP binding"/>
    <property type="evidence" value="ECO:0007669"/>
    <property type="project" value="UniProtKB-UniRule"/>
</dbReference>
<dbReference type="GO" id="GO:0016301">
    <property type="term" value="F:kinase activity"/>
    <property type="evidence" value="ECO:0007669"/>
    <property type="project" value="UniProtKB-KW"/>
</dbReference>
<dbReference type="GO" id="GO:0016773">
    <property type="term" value="F:phosphotransferase activity, alcohol group as acceptor"/>
    <property type="evidence" value="ECO:0007669"/>
    <property type="project" value="UniProtKB-UniRule"/>
</dbReference>
<dbReference type="GO" id="GO:0097175">
    <property type="term" value="P:1,6-anhydro-N-acetyl-beta-muramic acid catabolic process"/>
    <property type="evidence" value="ECO:0007669"/>
    <property type="project" value="UniProtKB-UniRule"/>
</dbReference>
<dbReference type="GO" id="GO:0006040">
    <property type="term" value="P:amino sugar metabolic process"/>
    <property type="evidence" value="ECO:0007669"/>
    <property type="project" value="InterPro"/>
</dbReference>
<dbReference type="GO" id="GO:0009254">
    <property type="term" value="P:peptidoglycan turnover"/>
    <property type="evidence" value="ECO:0007669"/>
    <property type="project" value="UniProtKB-UniRule"/>
</dbReference>
<dbReference type="CDD" id="cd24050">
    <property type="entry name" value="ASKHA_NBD_ANMK"/>
    <property type="match status" value="1"/>
</dbReference>
<dbReference type="Gene3D" id="3.30.420.40">
    <property type="match status" value="2"/>
</dbReference>
<dbReference type="HAMAP" id="MF_01270">
    <property type="entry name" value="AnhMurNAc_kinase"/>
    <property type="match status" value="1"/>
</dbReference>
<dbReference type="InterPro" id="IPR005338">
    <property type="entry name" value="Anhydro_N_Ac-Mur_kinase"/>
</dbReference>
<dbReference type="InterPro" id="IPR043129">
    <property type="entry name" value="ATPase_NBD"/>
</dbReference>
<dbReference type="NCBIfam" id="NF007138">
    <property type="entry name" value="PRK09585.1-1"/>
    <property type="match status" value="1"/>
</dbReference>
<dbReference type="NCBIfam" id="NF007139">
    <property type="entry name" value="PRK09585.1-3"/>
    <property type="match status" value="1"/>
</dbReference>
<dbReference type="NCBIfam" id="NF007148">
    <property type="entry name" value="PRK09585.3-2"/>
    <property type="match status" value="1"/>
</dbReference>
<dbReference type="PANTHER" id="PTHR30605">
    <property type="entry name" value="ANHYDRO-N-ACETYLMURAMIC ACID KINASE"/>
    <property type="match status" value="1"/>
</dbReference>
<dbReference type="PANTHER" id="PTHR30605:SF0">
    <property type="entry name" value="ANHYDRO-N-ACETYLMURAMIC ACID KINASE"/>
    <property type="match status" value="1"/>
</dbReference>
<dbReference type="Pfam" id="PF03702">
    <property type="entry name" value="AnmK"/>
    <property type="match status" value="1"/>
</dbReference>
<dbReference type="SUPFAM" id="SSF53067">
    <property type="entry name" value="Actin-like ATPase domain"/>
    <property type="match status" value="1"/>
</dbReference>
<feature type="chain" id="PRO_1000067375" description="Anhydro-N-acetylmuramic acid kinase">
    <location>
        <begin position="1"/>
        <end position="370"/>
    </location>
</feature>
<feature type="binding site" evidence="1">
    <location>
        <begin position="12"/>
        <end position="19"/>
    </location>
    <ligand>
        <name>ATP</name>
        <dbReference type="ChEBI" id="CHEBI:30616"/>
    </ligand>
</feature>
<gene>
    <name evidence="1" type="primary">anmK</name>
    <name type="ordered locus">YPA_1718</name>
</gene>
<accession>Q1C788</accession>
<evidence type="ECO:0000255" key="1">
    <source>
        <dbReference type="HAMAP-Rule" id="MF_01270"/>
    </source>
</evidence>
<proteinExistence type="inferred from homology"/>
<organism>
    <name type="scientific">Yersinia pestis bv. Antiqua (strain Antiqua)</name>
    <dbReference type="NCBI Taxonomy" id="360102"/>
    <lineage>
        <taxon>Bacteria</taxon>
        <taxon>Pseudomonadati</taxon>
        <taxon>Pseudomonadota</taxon>
        <taxon>Gammaproteobacteria</taxon>
        <taxon>Enterobacterales</taxon>
        <taxon>Yersiniaceae</taxon>
        <taxon>Yersinia</taxon>
    </lineage>
</organism>
<sequence length="370" mass="39492">MKSGRFIGVMSGTSLDGVDVVLAAIDERMVAQQASYTHPIPLQLKKDILGMCQGQSTTLSAVGKLDAQLGILFAEAVLALLAKEGLSAQDITAIGCHGQTVWHEPLGEPAFTMQLGDNNRIAAMTQIATVGDFRRRDMAYGGQGAPLVPAFHHALLAHATEKRMVLNIGGIANLSVLLPDSPIRGFDTGPGNMLMDAWIWRNCSLPYDKDACWALSGHVNQPLLEQMFNDPYFRLPAPKSTGREYFNAAWLDKQLARIPGVTAEDIQATLAELTAVSITEQVRLAGGCDRLLVCGGGARNPLVMARISALLSGTEVCTTDDAGIRGDDMEALAFAWLAFRTLSGKPGNLPSVTGASRETILGAVHPVSSW</sequence>
<protein>
    <recommendedName>
        <fullName evidence="1">Anhydro-N-acetylmuramic acid kinase</fullName>
        <ecNumber evidence="1">2.7.1.170</ecNumber>
    </recommendedName>
    <alternativeName>
        <fullName evidence="1">AnhMurNAc kinase</fullName>
    </alternativeName>
</protein>